<evidence type="ECO:0000250" key="1">
    <source>
        <dbReference type="UniProtKB" id="P00410"/>
    </source>
</evidence>
<evidence type="ECO:0000255" key="2"/>
<evidence type="ECO:0000305" key="3"/>
<gene>
    <name type="primary">COX2</name>
    <name type="ORF">VapofMp05</name>
</gene>
<protein>
    <recommendedName>
        <fullName>Cytochrome c oxidase subunit 2</fullName>
        <ecNumber>7.1.1.9</ecNumber>
    </recommendedName>
    <alternativeName>
        <fullName>Cytochrome c oxidase polypeptide II</fullName>
    </alternativeName>
</protein>
<geneLocation type="mitochondrion"/>
<feature type="chain" id="PRO_0000356869" description="Cytochrome c oxidase subunit 2">
    <location>
        <begin position="1"/>
        <end position="249"/>
    </location>
</feature>
<feature type="transmembrane region" description="Helical" evidence="2">
    <location>
        <begin position="40"/>
        <end position="60"/>
    </location>
</feature>
<feature type="transmembrane region" description="Helical" evidence="2">
    <location>
        <begin position="81"/>
        <end position="101"/>
    </location>
</feature>
<feature type="binding site" evidence="1">
    <location>
        <position position="184"/>
    </location>
    <ligand>
        <name>Cu cation</name>
        <dbReference type="ChEBI" id="CHEBI:23378"/>
        <label>A1</label>
    </ligand>
</feature>
<feature type="binding site" evidence="1">
    <location>
        <position position="219"/>
    </location>
    <ligand>
        <name>Cu cation</name>
        <dbReference type="ChEBI" id="CHEBI:23378"/>
        <label>A1</label>
    </ligand>
</feature>
<feature type="binding site" evidence="1">
    <location>
        <position position="219"/>
    </location>
    <ligand>
        <name>Cu cation</name>
        <dbReference type="ChEBI" id="CHEBI:23378"/>
        <label>A2</label>
    </ligand>
</feature>
<feature type="binding site" evidence="1">
    <location>
        <position position="221"/>
    </location>
    <ligand>
        <name>Cu cation</name>
        <dbReference type="ChEBI" id="CHEBI:23378"/>
        <label>A2</label>
    </ligand>
</feature>
<feature type="binding site" evidence="1">
    <location>
        <position position="221"/>
    </location>
    <ligand>
        <name>Mg(2+)</name>
        <dbReference type="ChEBI" id="CHEBI:18420"/>
        <note>ligand shared with subunit 1</note>
    </ligand>
</feature>
<feature type="binding site" evidence="1">
    <location>
        <position position="223"/>
    </location>
    <ligand>
        <name>Cu cation</name>
        <dbReference type="ChEBI" id="CHEBI:23378"/>
        <label>A1</label>
    </ligand>
</feature>
<feature type="binding site" evidence="1">
    <location>
        <position position="223"/>
    </location>
    <ligand>
        <name>Cu cation</name>
        <dbReference type="ChEBI" id="CHEBI:23378"/>
        <label>A2</label>
    </ligand>
</feature>
<feature type="binding site" evidence="1">
    <location>
        <position position="227"/>
    </location>
    <ligand>
        <name>Cu cation</name>
        <dbReference type="ChEBI" id="CHEBI:23378"/>
        <label>A2</label>
    </ligand>
</feature>
<feature type="binding site" evidence="1">
    <location>
        <position position="230"/>
    </location>
    <ligand>
        <name>Cu cation</name>
        <dbReference type="ChEBI" id="CHEBI:23378"/>
        <label>A1</label>
    </ligand>
</feature>
<keyword id="KW-0186">Copper</keyword>
<keyword id="KW-0249">Electron transport</keyword>
<keyword id="KW-0460">Magnesium</keyword>
<keyword id="KW-0472">Membrane</keyword>
<keyword id="KW-0479">Metal-binding</keyword>
<keyword id="KW-0496">Mitochondrion</keyword>
<keyword id="KW-0999">Mitochondrion inner membrane</keyword>
<keyword id="KW-1185">Reference proteome</keyword>
<keyword id="KW-0679">Respiratory chain</keyword>
<keyword id="KW-1278">Translocase</keyword>
<keyword id="KW-0812">Transmembrane</keyword>
<keyword id="KW-1133">Transmembrane helix</keyword>
<keyword id="KW-0813">Transport</keyword>
<name>COX2_VANPO</name>
<proteinExistence type="inferred from homology"/>
<dbReference type="EC" id="7.1.1.9"/>
<dbReference type="EMBL" id="AM698041">
    <property type="protein sequence ID" value="CAN85578.1"/>
    <property type="status" value="ALT_INIT"/>
    <property type="molecule type" value="Genomic_DNA"/>
</dbReference>
<dbReference type="RefSeq" id="YP_001331017.1">
    <property type="nucleotide sequence ID" value="NC_009638.1"/>
</dbReference>
<dbReference type="SMR" id="A6H4Q5"/>
<dbReference type="FunCoup" id="A6H4Q5">
    <property type="interactions" value="239"/>
</dbReference>
<dbReference type="STRING" id="436907.A6H4Q5"/>
<dbReference type="KEGG" id="vpo:VapofMp05"/>
<dbReference type="InParanoid" id="A6H4Q5"/>
<dbReference type="Proteomes" id="UP000000267">
    <property type="component" value="Mitochondrion"/>
</dbReference>
<dbReference type="GO" id="GO:0005743">
    <property type="term" value="C:mitochondrial inner membrane"/>
    <property type="evidence" value="ECO:0007669"/>
    <property type="project" value="UniProtKB-SubCell"/>
</dbReference>
<dbReference type="GO" id="GO:0005507">
    <property type="term" value="F:copper ion binding"/>
    <property type="evidence" value="ECO:0007669"/>
    <property type="project" value="InterPro"/>
</dbReference>
<dbReference type="GO" id="GO:0004129">
    <property type="term" value="F:cytochrome-c oxidase activity"/>
    <property type="evidence" value="ECO:0007669"/>
    <property type="project" value="UniProtKB-EC"/>
</dbReference>
<dbReference type="GO" id="GO:0042773">
    <property type="term" value="P:ATP synthesis coupled electron transport"/>
    <property type="evidence" value="ECO:0007669"/>
    <property type="project" value="TreeGrafter"/>
</dbReference>
<dbReference type="CDD" id="cd13912">
    <property type="entry name" value="CcO_II_C"/>
    <property type="match status" value="1"/>
</dbReference>
<dbReference type="FunFam" id="1.10.287.90:FF:000004">
    <property type="entry name" value="Cytochrome c oxidase subunit 2"/>
    <property type="match status" value="1"/>
</dbReference>
<dbReference type="FunFam" id="2.60.40.420:FF:000001">
    <property type="entry name" value="Cytochrome c oxidase subunit 2"/>
    <property type="match status" value="1"/>
</dbReference>
<dbReference type="Gene3D" id="1.10.287.90">
    <property type="match status" value="1"/>
</dbReference>
<dbReference type="Gene3D" id="2.60.40.420">
    <property type="entry name" value="Cupredoxins - blue copper proteins"/>
    <property type="match status" value="1"/>
</dbReference>
<dbReference type="InterPro" id="IPR045187">
    <property type="entry name" value="CcO_II"/>
</dbReference>
<dbReference type="InterPro" id="IPR002429">
    <property type="entry name" value="CcO_II-like_C"/>
</dbReference>
<dbReference type="InterPro" id="IPR034210">
    <property type="entry name" value="CcO_II_C"/>
</dbReference>
<dbReference type="InterPro" id="IPR001505">
    <property type="entry name" value="Copper_CuA"/>
</dbReference>
<dbReference type="InterPro" id="IPR008972">
    <property type="entry name" value="Cupredoxin"/>
</dbReference>
<dbReference type="InterPro" id="IPR014222">
    <property type="entry name" value="Cyt_c_oxidase_su2"/>
</dbReference>
<dbReference type="InterPro" id="IPR011759">
    <property type="entry name" value="Cyt_c_oxidase_su2_TM_dom"/>
</dbReference>
<dbReference type="InterPro" id="IPR036257">
    <property type="entry name" value="Cyt_c_oxidase_su2_TM_sf"/>
</dbReference>
<dbReference type="NCBIfam" id="TIGR02866">
    <property type="entry name" value="CoxB"/>
    <property type="match status" value="1"/>
</dbReference>
<dbReference type="PANTHER" id="PTHR22888:SF9">
    <property type="entry name" value="CYTOCHROME C OXIDASE SUBUNIT 2"/>
    <property type="match status" value="1"/>
</dbReference>
<dbReference type="PANTHER" id="PTHR22888">
    <property type="entry name" value="CYTOCHROME C OXIDASE, SUBUNIT II"/>
    <property type="match status" value="1"/>
</dbReference>
<dbReference type="Pfam" id="PF00116">
    <property type="entry name" value="COX2"/>
    <property type="match status" value="1"/>
</dbReference>
<dbReference type="Pfam" id="PF02790">
    <property type="entry name" value="COX2_TM"/>
    <property type="match status" value="1"/>
</dbReference>
<dbReference type="PRINTS" id="PR01166">
    <property type="entry name" value="CYCOXIDASEII"/>
</dbReference>
<dbReference type="SUPFAM" id="SSF49503">
    <property type="entry name" value="Cupredoxins"/>
    <property type="match status" value="1"/>
</dbReference>
<dbReference type="SUPFAM" id="SSF81464">
    <property type="entry name" value="Cytochrome c oxidase subunit II-like, transmembrane region"/>
    <property type="match status" value="1"/>
</dbReference>
<dbReference type="PROSITE" id="PS00078">
    <property type="entry name" value="COX2"/>
    <property type="match status" value="1"/>
</dbReference>
<dbReference type="PROSITE" id="PS50857">
    <property type="entry name" value="COX2_CUA"/>
    <property type="match status" value="1"/>
</dbReference>
<dbReference type="PROSITE" id="PS50999">
    <property type="entry name" value="COX2_TM"/>
    <property type="match status" value="1"/>
</dbReference>
<comment type="function">
    <text evidence="1">Component of the cytochrome c oxidase, the last enzyme in the mitochondrial electron transport chain which drives oxidative phosphorylation. The respiratory chain contains 3 multisubunit complexes succinate dehydrogenase (complex II, CII), ubiquinol-cytochrome c oxidoreductase (cytochrome b-c1 complex, complex III, CIII) and cytochrome c oxidase (complex IV, CIV), that cooperate to transfer electrons derived from NADH and succinate to molecular oxygen, creating an electrochemical gradient over the inner membrane that drives transmembrane transport and the ATP synthase. Cytochrome c oxidase is the component of the respiratory chain that catalyzes the reduction of oxygen to water. Electrons originating from reduced cytochrome c in the intermembrane space (IMS) are transferred via the dinuclear copper A center (CU(A)) of subunit 2 and heme A of subunit 1 to the active site in subunit 1, a binuclear center (BNC) formed by heme A3 and copper B (CU(B)). The BNC reduces molecular oxygen to 2 water molecules using 4 electrons from cytochrome c in the IMS and 4 protons from the mitochondrial matrix.</text>
</comment>
<comment type="catalytic activity">
    <reaction evidence="1">
        <text>4 Fe(II)-[cytochrome c] + O2 + 8 H(+)(in) = 4 Fe(III)-[cytochrome c] + 2 H2O + 4 H(+)(out)</text>
        <dbReference type="Rhea" id="RHEA:11436"/>
        <dbReference type="Rhea" id="RHEA-COMP:10350"/>
        <dbReference type="Rhea" id="RHEA-COMP:14399"/>
        <dbReference type="ChEBI" id="CHEBI:15377"/>
        <dbReference type="ChEBI" id="CHEBI:15378"/>
        <dbReference type="ChEBI" id="CHEBI:15379"/>
        <dbReference type="ChEBI" id="CHEBI:29033"/>
        <dbReference type="ChEBI" id="CHEBI:29034"/>
        <dbReference type="EC" id="7.1.1.9"/>
    </reaction>
    <physiologicalReaction direction="left-to-right" evidence="1">
        <dbReference type="Rhea" id="RHEA:11437"/>
    </physiologicalReaction>
</comment>
<comment type="cofactor">
    <cofactor evidence="1">
        <name>Cu cation</name>
        <dbReference type="ChEBI" id="CHEBI:23378"/>
    </cofactor>
    <text evidence="1">Binds a dinuclear copper A center per subunit.</text>
</comment>
<comment type="subunit">
    <text evidence="1">Component of the cytochrome c oxidase (complex IV, CIV), a multisubunit enzyme composed of a catalytic core of 3 subunits and several supernumerary subunits. The complex exists as a monomer or a dimer and forms supercomplexes (SCs) in the inner mitochondrial membrane with ubiquinol-cytochrome c oxidoreductase (cytochrome b-c1 complex, complex III, CIII).</text>
</comment>
<comment type="subcellular location">
    <subcellularLocation>
        <location evidence="1">Mitochondrion inner membrane</location>
        <topology evidence="1">Multi-pass membrane protein</topology>
    </subcellularLocation>
</comment>
<comment type="similarity">
    <text evidence="3">Belongs to the cytochrome c oxidase subunit 2 family.</text>
</comment>
<comment type="sequence caution" evidence="3">
    <conflict type="erroneous initiation">
        <sequence resource="EMBL-CDS" id="CAN85578"/>
    </conflict>
</comment>
<accession>A6H4Q5</accession>
<organism>
    <name type="scientific">Vanderwaltozyma polyspora (strain ATCC 22028 / DSM 70294 / BCRC 21397 / CBS 2163 / NBRC 10782 / NRRL Y-8283 / UCD 57-17)</name>
    <name type="common">Kluyveromyces polysporus</name>
    <dbReference type="NCBI Taxonomy" id="436907"/>
    <lineage>
        <taxon>Eukaryota</taxon>
        <taxon>Fungi</taxon>
        <taxon>Dikarya</taxon>
        <taxon>Ascomycota</taxon>
        <taxon>Saccharomycotina</taxon>
        <taxon>Saccharomycetes</taxon>
        <taxon>Saccharomycetales</taxon>
        <taxon>Saccharomycetaceae</taxon>
        <taxon>Vanderwaltozyma</taxon>
    </lineage>
</organism>
<sequence length="249" mass="28249">MYILTNILSIISNDVPTPYALGFQDSATPNQEGILELHDNIMFYLLVILGLVSWMLYTITKTYSKNPLPYKYMKHGQFIEIIWTIFPAVVLLIIAFPSFILLYLCDEVISPAMTVKVIGYQWYWKYEYSDFVNSNGETVEFESYIIPDDLLEEGQLRLLDTDTSVVVPVDTHIRFIVTAADVIHDFAIPSLGIKVDANPGRLNQVSALIQREGVFYGMCSELCGTGHSQMPIKIEVVSLGKYLGWLNEQ</sequence>
<reference key="1">
    <citation type="journal article" date="2007" name="Proc. Natl. Acad. Sci. U.S.A.">
        <title>Independent sorting-out of thousands of duplicated gene pairs in two yeast species descended from a whole-genome duplication.</title>
        <authorList>
            <person name="Scannell D.R."/>
            <person name="Frank A.C."/>
            <person name="Conant G.C."/>
            <person name="Byrne K.P."/>
            <person name="Woolfit M."/>
            <person name="Wolfe K.H."/>
        </authorList>
    </citation>
    <scope>NUCLEOTIDE SEQUENCE [LARGE SCALE GENOMIC DNA]</scope>
    <source>
        <strain>ATCC 22028 / DSM 70294 / BCRC 21397 / CBS 2163 / NBRC 10782 / NRRL Y-8283 / UCD 57-17</strain>
    </source>
</reference>